<protein>
    <recommendedName>
        <fullName evidence="1">Adenylosuccinate synthetase</fullName>
        <shortName evidence="1">AMPSase</shortName>
        <shortName evidence="1">AdSS</shortName>
        <ecNumber evidence="1">6.3.4.4</ecNumber>
    </recommendedName>
    <alternativeName>
        <fullName evidence="1">IMP--aspartate ligase</fullName>
    </alternativeName>
</protein>
<organism>
    <name type="scientific">Limosilactobacillus reuteri (strain DSM 20016)</name>
    <name type="common">Lactobacillus reuteri</name>
    <dbReference type="NCBI Taxonomy" id="557436"/>
    <lineage>
        <taxon>Bacteria</taxon>
        <taxon>Bacillati</taxon>
        <taxon>Bacillota</taxon>
        <taxon>Bacilli</taxon>
        <taxon>Lactobacillales</taxon>
        <taxon>Lactobacillaceae</taxon>
        <taxon>Limosilactobacillus</taxon>
    </lineage>
</organism>
<evidence type="ECO:0000255" key="1">
    <source>
        <dbReference type="HAMAP-Rule" id="MF_00011"/>
    </source>
</evidence>
<dbReference type="EC" id="6.3.4.4" evidence="1"/>
<dbReference type="EMBL" id="CP000705">
    <property type="protein sequence ID" value="ABQ82344.1"/>
    <property type="molecule type" value="Genomic_DNA"/>
</dbReference>
<dbReference type="RefSeq" id="WP_003669597.1">
    <property type="nucleotide sequence ID" value="NC_009513.1"/>
</dbReference>
<dbReference type="SMR" id="A5VHM0"/>
<dbReference type="STRING" id="557436.Lreu_0069"/>
<dbReference type="KEGG" id="lre:Lreu_0069"/>
<dbReference type="PATRIC" id="fig|557436.17.peg.1419"/>
<dbReference type="eggNOG" id="COG0104">
    <property type="taxonomic scope" value="Bacteria"/>
</dbReference>
<dbReference type="HOGENOM" id="CLU_029848_0_0_9"/>
<dbReference type="UniPathway" id="UPA00075">
    <property type="reaction ID" value="UER00335"/>
</dbReference>
<dbReference type="Proteomes" id="UP000001991">
    <property type="component" value="Chromosome"/>
</dbReference>
<dbReference type="GO" id="GO:0005737">
    <property type="term" value="C:cytoplasm"/>
    <property type="evidence" value="ECO:0007669"/>
    <property type="project" value="UniProtKB-SubCell"/>
</dbReference>
<dbReference type="GO" id="GO:0004019">
    <property type="term" value="F:adenylosuccinate synthase activity"/>
    <property type="evidence" value="ECO:0007669"/>
    <property type="project" value="UniProtKB-UniRule"/>
</dbReference>
<dbReference type="GO" id="GO:0005525">
    <property type="term" value="F:GTP binding"/>
    <property type="evidence" value="ECO:0007669"/>
    <property type="project" value="UniProtKB-UniRule"/>
</dbReference>
<dbReference type="GO" id="GO:0000287">
    <property type="term" value="F:magnesium ion binding"/>
    <property type="evidence" value="ECO:0007669"/>
    <property type="project" value="UniProtKB-UniRule"/>
</dbReference>
<dbReference type="GO" id="GO:0044208">
    <property type="term" value="P:'de novo' AMP biosynthetic process"/>
    <property type="evidence" value="ECO:0007669"/>
    <property type="project" value="UniProtKB-UniRule"/>
</dbReference>
<dbReference type="GO" id="GO:0046040">
    <property type="term" value="P:IMP metabolic process"/>
    <property type="evidence" value="ECO:0007669"/>
    <property type="project" value="TreeGrafter"/>
</dbReference>
<dbReference type="CDD" id="cd03108">
    <property type="entry name" value="AdSS"/>
    <property type="match status" value="1"/>
</dbReference>
<dbReference type="FunFam" id="1.10.300.10:FF:000001">
    <property type="entry name" value="Adenylosuccinate synthetase"/>
    <property type="match status" value="1"/>
</dbReference>
<dbReference type="FunFam" id="3.90.170.10:FF:000001">
    <property type="entry name" value="Adenylosuccinate synthetase"/>
    <property type="match status" value="1"/>
</dbReference>
<dbReference type="Gene3D" id="3.40.440.10">
    <property type="entry name" value="Adenylosuccinate Synthetase, subunit A, domain 1"/>
    <property type="match status" value="1"/>
</dbReference>
<dbReference type="Gene3D" id="1.10.300.10">
    <property type="entry name" value="Adenylosuccinate Synthetase, subunit A, domain 2"/>
    <property type="match status" value="1"/>
</dbReference>
<dbReference type="Gene3D" id="3.90.170.10">
    <property type="entry name" value="Adenylosuccinate Synthetase, subunit A, domain 3"/>
    <property type="match status" value="1"/>
</dbReference>
<dbReference type="HAMAP" id="MF_00011">
    <property type="entry name" value="Adenylosucc_synth"/>
    <property type="match status" value="1"/>
</dbReference>
<dbReference type="InterPro" id="IPR018220">
    <property type="entry name" value="Adenylosuccin_syn_GTP-bd"/>
</dbReference>
<dbReference type="InterPro" id="IPR033128">
    <property type="entry name" value="Adenylosuccin_syn_Lys_AS"/>
</dbReference>
<dbReference type="InterPro" id="IPR042109">
    <property type="entry name" value="Adenylosuccinate_synth_dom1"/>
</dbReference>
<dbReference type="InterPro" id="IPR042110">
    <property type="entry name" value="Adenylosuccinate_synth_dom2"/>
</dbReference>
<dbReference type="InterPro" id="IPR042111">
    <property type="entry name" value="Adenylosuccinate_synth_dom3"/>
</dbReference>
<dbReference type="InterPro" id="IPR001114">
    <property type="entry name" value="Adenylosuccinate_synthetase"/>
</dbReference>
<dbReference type="InterPro" id="IPR027417">
    <property type="entry name" value="P-loop_NTPase"/>
</dbReference>
<dbReference type="NCBIfam" id="NF002223">
    <property type="entry name" value="PRK01117.1"/>
    <property type="match status" value="1"/>
</dbReference>
<dbReference type="NCBIfam" id="TIGR00184">
    <property type="entry name" value="purA"/>
    <property type="match status" value="1"/>
</dbReference>
<dbReference type="PANTHER" id="PTHR11846">
    <property type="entry name" value="ADENYLOSUCCINATE SYNTHETASE"/>
    <property type="match status" value="1"/>
</dbReference>
<dbReference type="PANTHER" id="PTHR11846:SF0">
    <property type="entry name" value="ADENYLOSUCCINATE SYNTHETASE"/>
    <property type="match status" value="1"/>
</dbReference>
<dbReference type="Pfam" id="PF00709">
    <property type="entry name" value="Adenylsucc_synt"/>
    <property type="match status" value="1"/>
</dbReference>
<dbReference type="SMART" id="SM00788">
    <property type="entry name" value="Adenylsucc_synt"/>
    <property type="match status" value="1"/>
</dbReference>
<dbReference type="SUPFAM" id="SSF52540">
    <property type="entry name" value="P-loop containing nucleoside triphosphate hydrolases"/>
    <property type="match status" value="1"/>
</dbReference>
<dbReference type="PROSITE" id="PS01266">
    <property type="entry name" value="ADENYLOSUCCIN_SYN_1"/>
    <property type="match status" value="1"/>
</dbReference>
<dbReference type="PROSITE" id="PS00513">
    <property type="entry name" value="ADENYLOSUCCIN_SYN_2"/>
    <property type="match status" value="1"/>
</dbReference>
<name>PURA_LIMRD</name>
<proteinExistence type="inferred from homology"/>
<keyword id="KW-0963">Cytoplasm</keyword>
<keyword id="KW-0342">GTP-binding</keyword>
<keyword id="KW-0436">Ligase</keyword>
<keyword id="KW-0460">Magnesium</keyword>
<keyword id="KW-0479">Metal-binding</keyword>
<keyword id="KW-0547">Nucleotide-binding</keyword>
<keyword id="KW-0658">Purine biosynthesis</keyword>
<keyword id="KW-1185">Reference proteome</keyword>
<reference key="1">
    <citation type="journal article" date="2011" name="PLoS Genet.">
        <title>The evolution of host specialization in the vertebrate gut symbiont Lactobacillus reuteri.</title>
        <authorList>
            <person name="Frese S.A."/>
            <person name="Benson A.K."/>
            <person name="Tannock G.W."/>
            <person name="Loach D.M."/>
            <person name="Kim J."/>
            <person name="Zhang M."/>
            <person name="Oh P.L."/>
            <person name="Heng N.C."/>
            <person name="Patil P.B."/>
            <person name="Juge N."/>
            <person name="Mackenzie D.A."/>
            <person name="Pearson B.M."/>
            <person name="Lapidus A."/>
            <person name="Dalin E."/>
            <person name="Tice H."/>
            <person name="Goltsman E."/>
            <person name="Land M."/>
            <person name="Hauser L."/>
            <person name="Ivanova N."/>
            <person name="Kyrpides N.C."/>
            <person name="Walter J."/>
        </authorList>
    </citation>
    <scope>NUCLEOTIDE SEQUENCE [LARGE SCALE GENOMIC DNA]</scope>
    <source>
        <strain>DSM 20016</strain>
    </source>
</reference>
<comment type="function">
    <text evidence="1">Plays an important role in the de novo pathway of purine nucleotide biosynthesis. Catalyzes the first committed step in the biosynthesis of AMP from IMP.</text>
</comment>
<comment type="catalytic activity">
    <reaction evidence="1">
        <text>IMP + L-aspartate + GTP = N(6)-(1,2-dicarboxyethyl)-AMP + GDP + phosphate + 2 H(+)</text>
        <dbReference type="Rhea" id="RHEA:15753"/>
        <dbReference type="ChEBI" id="CHEBI:15378"/>
        <dbReference type="ChEBI" id="CHEBI:29991"/>
        <dbReference type="ChEBI" id="CHEBI:37565"/>
        <dbReference type="ChEBI" id="CHEBI:43474"/>
        <dbReference type="ChEBI" id="CHEBI:57567"/>
        <dbReference type="ChEBI" id="CHEBI:58053"/>
        <dbReference type="ChEBI" id="CHEBI:58189"/>
        <dbReference type="EC" id="6.3.4.4"/>
    </reaction>
</comment>
<comment type="cofactor">
    <cofactor evidence="1">
        <name>Mg(2+)</name>
        <dbReference type="ChEBI" id="CHEBI:18420"/>
    </cofactor>
    <text evidence="1">Binds 1 Mg(2+) ion per subunit.</text>
</comment>
<comment type="pathway">
    <text evidence="1">Purine metabolism; AMP biosynthesis via de novo pathway; AMP from IMP: step 1/2.</text>
</comment>
<comment type="subunit">
    <text evidence="1">Homodimer.</text>
</comment>
<comment type="subcellular location">
    <subcellularLocation>
        <location evidence="1">Cytoplasm</location>
    </subcellularLocation>
</comment>
<comment type="similarity">
    <text evidence="1">Belongs to the adenylosuccinate synthetase family.</text>
</comment>
<feature type="chain" id="PRO_1000057090" description="Adenylosuccinate synthetase">
    <location>
        <begin position="1"/>
        <end position="432"/>
    </location>
</feature>
<feature type="active site" description="Proton acceptor" evidence="1">
    <location>
        <position position="13"/>
    </location>
</feature>
<feature type="active site" description="Proton donor" evidence="1">
    <location>
        <position position="41"/>
    </location>
</feature>
<feature type="binding site" evidence="1">
    <location>
        <begin position="12"/>
        <end position="18"/>
    </location>
    <ligand>
        <name>GTP</name>
        <dbReference type="ChEBI" id="CHEBI:37565"/>
    </ligand>
</feature>
<feature type="binding site" description="in other chain" evidence="1">
    <location>
        <begin position="13"/>
        <end position="16"/>
    </location>
    <ligand>
        <name>IMP</name>
        <dbReference type="ChEBI" id="CHEBI:58053"/>
        <note>ligand shared between dimeric partners</note>
    </ligand>
</feature>
<feature type="binding site" evidence="1">
    <location>
        <position position="13"/>
    </location>
    <ligand>
        <name>Mg(2+)</name>
        <dbReference type="ChEBI" id="CHEBI:18420"/>
    </ligand>
</feature>
<feature type="binding site" description="in other chain" evidence="1">
    <location>
        <begin position="38"/>
        <end position="41"/>
    </location>
    <ligand>
        <name>IMP</name>
        <dbReference type="ChEBI" id="CHEBI:58053"/>
        <note>ligand shared between dimeric partners</note>
    </ligand>
</feature>
<feature type="binding site" evidence="1">
    <location>
        <begin position="40"/>
        <end position="42"/>
    </location>
    <ligand>
        <name>GTP</name>
        <dbReference type="ChEBI" id="CHEBI:37565"/>
    </ligand>
</feature>
<feature type="binding site" evidence="1">
    <location>
        <position position="40"/>
    </location>
    <ligand>
        <name>Mg(2+)</name>
        <dbReference type="ChEBI" id="CHEBI:18420"/>
    </ligand>
</feature>
<feature type="binding site" description="in other chain" evidence="1">
    <location>
        <position position="128"/>
    </location>
    <ligand>
        <name>IMP</name>
        <dbReference type="ChEBI" id="CHEBI:58053"/>
        <note>ligand shared between dimeric partners</note>
    </ligand>
</feature>
<feature type="binding site" evidence="1">
    <location>
        <position position="142"/>
    </location>
    <ligand>
        <name>IMP</name>
        <dbReference type="ChEBI" id="CHEBI:58053"/>
        <note>ligand shared between dimeric partners</note>
    </ligand>
</feature>
<feature type="binding site" description="in other chain" evidence="1">
    <location>
        <position position="223"/>
    </location>
    <ligand>
        <name>IMP</name>
        <dbReference type="ChEBI" id="CHEBI:58053"/>
        <note>ligand shared between dimeric partners</note>
    </ligand>
</feature>
<feature type="binding site" description="in other chain" evidence="1">
    <location>
        <position position="238"/>
    </location>
    <ligand>
        <name>IMP</name>
        <dbReference type="ChEBI" id="CHEBI:58053"/>
        <note>ligand shared between dimeric partners</note>
    </ligand>
</feature>
<feature type="binding site" evidence="1">
    <location>
        <begin position="298"/>
        <end position="304"/>
    </location>
    <ligand>
        <name>substrate</name>
    </ligand>
</feature>
<feature type="binding site" description="in other chain" evidence="1">
    <location>
        <position position="302"/>
    </location>
    <ligand>
        <name>IMP</name>
        <dbReference type="ChEBI" id="CHEBI:58053"/>
        <note>ligand shared between dimeric partners</note>
    </ligand>
</feature>
<feature type="binding site" evidence="1">
    <location>
        <position position="304"/>
    </location>
    <ligand>
        <name>GTP</name>
        <dbReference type="ChEBI" id="CHEBI:37565"/>
    </ligand>
</feature>
<feature type="binding site" evidence="1">
    <location>
        <begin position="330"/>
        <end position="332"/>
    </location>
    <ligand>
        <name>GTP</name>
        <dbReference type="ChEBI" id="CHEBI:37565"/>
    </ligand>
</feature>
<feature type="binding site" evidence="1">
    <location>
        <begin position="412"/>
        <end position="414"/>
    </location>
    <ligand>
        <name>GTP</name>
        <dbReference type="ChEBI" id="CHEBI:37565"/>
    </ligand>
</feature>
<gene>
    <name evidence="1" type="primary">purA</name>
    <name type="ordered locus">Lreu_0069</name>
</gene>
<sequence>MSSVVIVGSQWGDEGKGKMTDYLSQEADVVVRSQGGNNAGHTIAFDGKKFALRLVPSGIFAKDKLAVIGNGVVINPPALLKELHYLQDNGIDISGLRISSRSHITFPYHILLDKCQEEAKGDHKVGTTKNGIGPTYMDKVSRVGIRMCDLLEKDTFKEKLERNLAEKNELFTKLYHVDPISFDDIFESYYEYGQELKQYVTDTAQIVNDALDQDKKVLFEGAQGVMLDVDQGTYPYVTASNPIAGGVCTGVGVGPNKIETVVGICKAYSTRVGAGPFPTELTDEIGDQIRETGHEYGTVTGRPRRVGWFDSVAMRHARRVSGISCLSLNLLDVLTGLKTVKICTSYKLDGKQIDYYPASLKELERCEPVYEELPGWDEDITGAKKFEDLPINAQNYLKRVSELSESPLATVSVGADRIQTIIVKDPWEFAHK</sequence>
<accession>A5VHM0</accession>